<proteinExistence type="inferred from homology"/>
<reference key="1">
    <citation type="journal article" date="2007" name="Science">
        <title>Genome sequence of Aedes aegypti, a major arbovirus vector.</title>
        <authorList>
            <person name="Nene V."/>
            <person name="Wortman J.R."/>
            <person name="Lawson D."/>
            <person name="Haas B.J."/>
            <person name="Kodira C.D."/>
            <person name="Tu Z.J."/>
            <person name="Loftus B.J."/>
            <person name="Xi Z."/>
            <person name="Megy K."/>
            <person name="Grabherr M."/>
            <person name="Ren Q."/>
            <person name="Zdobnov E.M."/>
            <person name="Lobo N.F."/>
            <person name="Campbell K.S."/>
            <person name="Brown S.E."/>
            <person name="Bonaldo M.F."/>
            <person name="Zhu J."/>
            <person name="Sinkins S.P."/>
            <person name="Hogenkamp D.G."/>
            <person name="Amedeo P."/>
            <person name="Arensburger P."/>
            <person name="Atkinson P.W."/>
            <person name="Bidwell S.L."/>
            <person name="Biedler J."/>
            <person name="Birney E."/>
            <person name="Bruggner R.V."/>
            <person name="Costas J."/>
            <person name="Coy M.R."/>
            <person name="Crabtree J."/>
            <person name="Crawford M."/>
            <person name="DeBruyn B."/>
            <person name="DeCaprio D."/>
            <person name="Eiglmeier K."/>
            <person name="Eisenstadt E."/>
            <person name="El-Dorry H."/>
            <person name="Gelbart W.M."/>
            <person name="Gomes S.L."/>
            <person name="Hammond M."/>
            <person name="Hannick L.I."/>
            <person name="Hogan J.R."/>
            <person name="Holmes M.H."/>
            <person name="Jaffe D."/>
            <person name="Johnston S.J."/>
            <person name="Kennedy R.C."/>
            <person name="Koo H."/>
            <person name="Kravitz S."/>
            <person name="Kriventseva E.V."/>
            <person name="Kulp D."/>
            <person name="Labutti K."/>
            <person name="Lee E."/>
            <person name="Li S."/>
            <person name="Lovin D.D."/>
            <person name="Mao C."/>
            <person name="Mauceli E."/>
            <person name="Menck C.F."/>
            <person name="Miller J.R."/>
            <person name="Montgomery P."/>
            <person name="Mori A."/>
            <person name="Nascimento A.L."/>
            <person name="Naveira H.F."/>
            <person name="Nusbaum C."/>
            <person name="O'Leary S.B."/>
            <person name="Orvis J."/>
            <person name="Pertea M."/>
            <person name="Quesneville H."/>
            <person name="Reidenbach K.R."/>
            <person name="Rogers Y.-H.C."/>
            <person name="Roth C.W."/>
            <person name="Schneider J.R."/>
            <person name="Schatz M."/>
            <person name="Shumway M."/>
            <person name="Stanke M."/>
            <person name="Stinson E.O."/>
            <person name="Tubio J.M.C."/>
            <person name="Vanzee J.P."/>
            <person name="Verjovski-Almeida S."/>
            <person name="Werner D."/>
            <person name="White O.R."/>
            <person name="Wyder S."/>
            <person name="Zeng Q."/>
            <person name="Zhao Q."/>
            <person name="Zhao Y."/>
            <person name="Hill C.A."/>
            <person name="Raikhel A.S."/>
            <person name="Soares M.B."/>
            <person name="Knudson D.L."/>
            <person name="Lee N.H."/>
            <person name="Galagan J."/>
            <person name="Salzberg S.L."/>
            <person name="Paulsen I.T."/>
            <person name="Dimopoulos G."/>
            <person name="Collins F.H."/>
            <person name="Bruce B."/>
            <person name="Fraser-Liggett C.M."/>
            <person name="Severson D.W."/>
        </authorList>
    </citation>
    <scope>NUCLEOTIDE SEQUENCE [LARGE SCALE GENOMIC DNA]</scope>
    <source>
        <strain>LVPib12</strain>
    </source>
</reference>
<name>MED18_AEDAE</name>
<comment type="function">
    <text evidence="1">Component of the Mediator complex, a coactivator involved in the regulated transcription of nearly all RNA polymerase II-dependent genes. Mediator functions as a bridge to convey information from gene-specific regulatory proteins to the basal RNA polymerase II transcription machinery. Mediator is recruited to promoters by direct interactions with regulatory proteins and serves as a scaffold for the assembly of a functional preinitiation complex with RNA polymerase II and the general transcription factors (By similarity).</text>
</comment>
<comment type="subunit">
    <text evidence="1">Component of the Mediator complex.</text>
</comment>
<comment type="subcellular location">
    <subcellularLocation>
        <location evidence="2">Nucleus</location>
    </subcellularLocation>
</comment>
<comment type="similarity">
    <text evidence="2">Belongs to the Mediator complex subunit 18 family.</text>
</comment>
<sequence length="215" mass="24276">MTTSATPMAAVDLLQQALNSNIIPNQEYLLQGSILDSAAEHLLHRLRGLCDNVDTGPEAFADYEMCLSLKVPNEKTPVMTVRVRKAQDTDAPYQLRYIGQPELGDRNRPTLVRSSLDIACTPHVVDFLTEMGFRVDFEYITKGYMFRKGRMKVTVSKIFKVNSSEPISQSYLVELSVLAPTGQDVIADDMRIFAEQLKPLVQLEKIDYKRFAQMP</sequence>
<keyword id="KW-0010">Activator</keyword>
<keyword id="KW-0539">Nucleus</keyword>
<keyword id="KW-1185">Reference proteome</keyword>
<keyword id="KW-0804">Transcription</keyword>
<keyword id="KW-0805">Transcription regulation</keyword>
<evidence type="ECO:0000250" key="1"/>
<evidence type="ECO:0000305" key="2"/>
<organism>
    <name type="scientific">Aedes aegypti</name>
    <name type="common">Yellowfever mosquito</name>
    <name type="synonym">Culex aegypti</name>
    <dbReference type="NCBI Taxonomy" id="7159"/>
    <lineage>
        <taxon>Eukaryota</taxon>
        <taxon>Metazoa</taxon>
        <taxon>Ecdysozoa</taxon>
        <taxon>Arthropoda</taxon>
        <taxon>Hexapoda</taxon>
        <taxon>Insecta</taxon>
        <taxon>Pterygota</taxon>
        <taxon>Neoptera</taxon>
        <taxon>Endopterygota</taxon>
        <taxon>Diptera</taxon>
        <taxon>Nematocera</taxon>
        <taxon>Culicoidea</taxon>
        <taxon>Culicidae</taxon>
        <taxon>Culicinae</taxon>
        <taxon>Aedini</taxon>
        <taxon>Aedes</taxon>
        <taxon>Stegomyia</taxon>
    </lineage>
</organism>
<gene>
    <name type="primary">MED18</name>
    <name type="ORF">AAEL002284</name>
</gene>
<accession>Q17IN5</accession>
<feature type="chain" id="PRO_0000304747" description="Mediator of RNA polymerase II transcription subunit 18">
    <location>
        <begin position="1"/>
        <end position="215"/>
    </location>
</feature>
<protein>
    <recommendedName>
        <fullName>Mediator of RNA polymerase II transcription subunit 18</fullName>
    </recommendedName>
    <alternativeName>
        <fullName>Mediator complex subunit 18</fullName>
    </alternativeName>
</protein>
<dbReference type="EMBL" id="CH477238">
    <property type="protein sequence ID" value="EAT46525.1"/>
    <property type="molecule type" value="Genomic_DNA"/>
</dbReference>
<dbReference type="SMR" id="Q17IN5"/>
<dbReference type="FunCoup" id="Q17IN5">
    <property type="interactions" value="1164"/>
</dbReference>
<dbReference type="STRING" id="7159.Q17IN5"/>
<dbReference type="PaxDb" id="7159-AAEL002284-PA"/>
<dbReference type="EnsemblMetazoa" id="AAEL002284-RA">
    <property type="protein sequence ID" value="AAEL002284-PA"/>
    <property type="gene ID" value="AAEL002284"/>
</dbReference>
<dbReference type="GeneID" id="5574182"/>
<dbReference type="KEGG" id="aag:5574182"/>
<dbReference type="CTD" id="54797"/>
<dbReference type="VEuPathDB" id="VectorBase:AAEL002284"/>
<dbReference type="eggNOG" id="KOG3264">
    <property type="taxonomic scope" value="Eukaryota"/>
</dbReference>
<dbReference type="HOGENOM" id="CLU_084570_0_0_1"/>
<dbReference type="InParanoid" id="Q17IN5"/>
<dbReference type="OMA" id="ARGYMFR"/>
<dbReference type="OrthoDB" id="10018982at2759"/>
<dbReference type="PhylomeDB" id="Q17IN5"/>
<dbReference type="Proteomes" id="UP000008820">
    <property type="component" value="Chromosome 3"/>
</dbReference>
<dbReference type="Proteomes" id="UP000682892">
    <property type="component" value="Chromosome 2"/>
</dbReference>
<dbReference type="GO" id="GO:0070847">
    <property type="term" value="C:core mediator complex"/>
    <property type="evidence" value="ECO:0007669"/>
    <property type="project" value="TreeGrafter"/>
</dbReference>
<dbReference type="GO" id="GO:0016592">
    <property type="term" value="C:mediator complex"/>
    <property type="evidence" value="ECO:0007669"/>
    <property type="project" value="InterPro"/>
</dbReference>
<dbReference type="GO" id="GO:0003712">
    <property type="term" value="F:transcription coregulator activity"/>
    <property type="evidence" value="ECO:0007669"/>
    <property type="project" value="InterPro"/>
</dbReference>
<dbReference type="GO" id="GO:0006357">
    <property type="term" value="P:regulation of transcription by RNA polymerase II"/>
    <property type="evidence" value="ECO:0007669"/>
    <property type="project" value="InterPro"/>
</dbReference>
<dbReference type="GO" id="GO:0006369">
    <property type="term" value="P:termination of RNA polymerase II transcription"/>
    <property type="evidence" value="ECO:0007669"/>
    <property type="project" value="TreeGrafter"/>
</dbReference>
<dbReference type="FunFam" id="2.40.320.10:FF:000001">
    <property type="entry name" value="Mediator of RNA polymerase II transcription subunit 18"/>
    <property type="match status" value="1"/>
</dbReference>
<dbReference type="Gene3D" id="2.40.320.10">
    <property type="entry name" value="Hypothetical Protein Pfu-838710-001"/>
    <property type="match status" value="1"/>
</dbReference>
<dbReference type="InterPro" id="IPR019095">
    <property type="entry name" value="Mediator_Med18"/>
</dbReference>
<dbReference type="PANTHER" id="PTHR13321:SF2">
    <property type="entry name" value="MEDIATOR OF RNA POLYMERASE II TRANSCRIPTION SUBUNIT 18"/>
    <property type="match status" value="1"/>
</dbReference>
<dbReference type="PANTHER" id="PTHR13321">
    <property type="entry name" value="MEDIATOR OF RNA POLYMERASE II TRANSCRIPTION, SUBUNIT 18"/>
    <property type="match status" value="1"/>
</dbReference>
<dbReference type="Pfam" id="PF09637">
    <property type="entry name" value="Med18"/>
    <property type="match status" value="1"/>
</dbReference>